<comment type="function">
    <text evidence="6">Plays an essential role in the assembly of succinate dehydrogenase (SDH), an enzyme complex (also referred to as respiratory complex II) that is a component of both the tricarboxylic acid (TCA) cycle and the mitochondrial electron transport chain, and which couples the oxidation of succinate to fumarate with the reduction of ubiquinone (coenzyme Q) to ubiquinol. Promotes maturation of the iron-sulfur protein subunit SDH2 of the SDH catalytic dimer, protecting it from the deleterious effects of oxidants. Acts together with SDHAF1 (SDH6).</text>
</comment>
<comment type="subunit">
    <text evidence="6">Interacts with SDH2 within an SDH1-SDH2 subcomplex.</text>
</comment>
<comment type="subcellular location">
    <subcellularLocation>
        <location evidence="2 4">Mitochondrion</location>
    </subcellularLocation>
    <subcellularLocation>
        <location evidence="1">Mitochondrion intermembrane space</location>
    </subcellularLocation>
    <subcellularLocation>
        <location evidence="6">Mitochondrion matrix</location>
    </subcellularLocation>
</comment>
<comment type="miscellaneous">
    <text evidence="3">Present with 195 molecules/cell in log phase SD medium.</text>
</comment>
<comment type="similarity">
    <text evidence="9">Belongs to the complex I LYR family. SDHAF3 subfamily.</text>
</comment>
<reference key="1">
    <citation type="submission" date="1995-05" db="EMBL/GenBank/DDBJ databases">
        <authorList>
            <person name="Meluh P.B."/>
            <person name="Koshland D.E."/>
        </authorList>
    </citation>
    <scope>NUCLEOTIDE SEQUENCE [GENOMIC DNA]</scope>
    <source>
        <strain>YNN 214</strain>
    </source>
</reference>
<reference key="2">
    <citation type="journal article" date="1997" name="Nature">
        <title>The nucleotide sequence of Saccharomyces cerevisiae chromosome IV.</title>
        <authorList>
            <person name="Jacq C."/>
            <person name="Alt-Moerbe J."/>
            <person name="Andre B."/>
            <person name="Arnold W."/>
            <person name="Bahr A."/>
            <person name="Ballesta J.P.G."/>
            <person name="Bargues M."/>
            <person name="Baron L."/>
            <person name="Becker A."/>
            <person name="Biteau N."/>
            <person name="Bloecker H."/>
            <person name="Blugeon C."/>
            <person name="Boskovic J."/>
            <person name="Brandt P."/>
            <person name="Brueckner M."/>
            <person name="Buitrago M.J."/>
            <person name="Coster F."/>
            <person name="Delaveau T."/>
            <person name="del Rey F."/>
            <person name="Dujon B."/>
            <person name="Eide L.G."/>
            <person name="Garcia-Cantalejo J.M."/>
            <person name="Goffeau A."/>
            <person name="Gomez-Peris A."/>
            <person name="Granotier C."/>
            <person name="Hanemann V."/>
            <person name="Hankeln T."/>
            <person name="Hoheisel J.D."/>
            <person name="Jaeger W."/>
            <person name="Jimenez A."/>
            <person name="Jonniaux J.-L."/>
            <person name="Kraemer C."/>
            <person name="Kuester H."/>
            <person name="Laamanen P."/>
            <person name="Legros Y."/>
            <person name="Louis E.J."/>
            <person name="Moeller-Rieker S."/>
            <person name="Monnet A."/>
            <person name="Moro M."/>
            <person name="Mueller-Auer S."/>
            <person name="Nussbaumer B."/>
            <person name="Paricio N."/>
            <person name="Paulin L."/>
            <person name="Perea J."/>
            <person name="Perez-Alonso M."/>
            <person name="Perez-Ortin J.E."/>
            <person name="Pohl T.M."/>
            <person name="Prydz H."/>
            <person name="Purnelle B."/>
            <person name="Rasmussen S.W."/>
            <person name="Remacha M.A."/>
            <person name="Revuelta J.L."/>
            <person name="Rieger M."/>
            <person name="Salom D."/>
            <person name="Saluz H.P."/>
            <person name="Saiz J.E."/>
            <person name="Saren A.-M."/>
            <person name="Schaefer M."/>
            <person name="Scharfe M."/>
            <person name="Schmidt E.R."/>
            <person name="Schneider C."/>
            <person name="Scholler P."/>
            <person name="Schwarz S."/>
            <person name="Soler-Mira A."/>
            <person name="Urrestarazu L.A."/>
            <person name="Verhasselt P."/>
            <person name="Vissers S."/>
            <person name="Voet M."/>
            <person name="Volckaert G."/>
            <person name="Wagner G."/>
            <person name="Wambutt R."/>
            <person name="Wedler E."/>
            <person name="Wedler H."/>
            <person name="Woelfl S."/>
            <person name="Harris D.E."/>
            <person name="Bowman S."/>
            <person name="Brown D."/>
            <person name="Churcher C.M."/>
            <person name="Connor R."/>
            <person name="Dedman K."/>
            <person name="Gentles S."/>
            <person name="Hamlin N."/>
            <person name="Hunt S."/>
            <person name="Jones L."/>
            <person name="McDonald S."/>
            <person name="Murphy L.D."/>
            <person name="Niblett D."/>
            <person name="Odell C."/>
            <person name="Oliver K."/>
            <person name="Rajandream M.A."/>
            <person name="Richards C."/>
            <person name="Shore L."/>
            <person name="Walsh S.V."/>
            <person name="Barrell B.G."/>
            <person name="Dietrich F.S."/>
            <person name="Mulligan J.T."/>
            <person name="Allen E."/>
            <person name="Araujo R."/>
            <person name="Aviles E."/>
            <person name="Berno A."/>
            <person name="Carpenter J."/>
            <person name="Chen E."/>
            <person name="Cherry J.M."/>
            <person name="Chung E."/>
            <person name="Duncan M."/>
            <person name="Hunicke-Smith S."/>
            <person name="Hyman R.W."/>
            <person name="Komp C."/>
            <person name="Lashkari D."/>
            <person name="Lew H."/>
            <person name="Lin D."/>
            <person name="Mosedale D."/>
            <person name="Nakahara K."/>
            <person name="Namath A."/>
            <person name="Oefner P."/>
            <person name="Oh C."/>
            <person name="Petel F.X."/>
            <person name="Roberts D."/>
            <person name="Schramm S."/>
            <person name="Schroeder M."/>
            <person name="Shogren T."/>
            <person name="Shroff N."/>
            <person name="Winant A."/>
            <person name="Yelton M.A."/>
            <person name="Botstein D."/>
            <person name="Davis R.W."/>
            <person name="Johnston M."/>
            <person name="Andrews S."/>
            <person name="Brinkman R."/>
            <person name="Cooper J."/>
            <person name="Ding H."/>
            <person name="Du Z."/>
            <person name="Favello A."/>
            <person name="Fulton L."/>
            <person name="Gattung S."/>
            <person name="Greco T."/>
            <person name="Hallsworth K."/>
            <person name="Hawkins J."/>
            <person name="Hillier L.W."/>
            <person name="Jier M."/>
            <person name="Johnson D."/>
            <person name="Johnston L."/>
            <person name="Kirsten J."/>
            <person name="Kucaba T."/>
            <person name="Langston Y."/>
            <person name="Latreille P."/>
            <person name="Le T."/>
            <person name="Mardis E."/>
            <person name="Menezes S."/>
            <person name="Miller N."/>
            <person name="Nhan M."/>
            <person name="Pauley A."/>
            <person name="Peluso D."/>
            <person name="Rifkin L."/>
            <person name="Riles L."/>
            <person name="Taich A."/>
            <person name="Trevaskis E."/>
            <person name="Vignati D."/>
            <person name="Wilcox L."/>
            <person name="Wohldman P."/>
            <person name="Vaudin M."/>
            <person name="Wilson R."/>
            <person name="Waterston R."/>
            <person name="Albermann K."/>
            <person name="Hani J."/>
            <person name="Heumann K."/>
            <person name="Kleine K."/>
            <person name="Mewes H.-W."/>
            <person name="Zollner A."/>
            <person name="Zaccaria P."/>
        </authorList>
    </citation>
    <scope>NUCLEOTIDE SEQUENCE [LARGE SCALE GENOMIC DNA]</scope>
    <source>
        <strain>ATCC 204508 / S288c</strain>
    </source>
</reference>
<reference key="3">
    <citation type="journal article" date="2014" name="G3 (Bethesda)">
        <title>The reference genome sequence of Saccharomyces cerevisiae: Then and now.</title>
        <authorList>
            <person name="Engel S.R."/>
            <person name="Dietrich F.S."/>
            <person name="Fisk D.G."/>
            <person name="Binkley G."/>
            <person name="Balakrishnan R."/>
            <person name="Costanzo M.C."/>
            <person name="Dwight S.S."/>
            <person name="Hitz B.C."/>
            <person name="Karra K."/>
            <person name="Nash R.S."/>
            <person name="Weng S."/>
            <person name="Wong E.D."/>
            <person name="Lloyd P."/>
            <person name="Skrzypek M.S."/>
            <person name="Miyasato S.R."/>
            <person name="Simison M."/>
            <person name="Cherry J.M."/>
        </authorList>
    </citation>
    <scope>GENOME REANNOTATION</scope>
    <source>
        <strain>ATCC 204508 / S288c</strain>
    </source>
</reference>
<reference key="4">
    <citation type="journal article" date="2007" name="Genome Res.">
        <title>Approaching a complete repository of sequence-verified protein-encoding clones for Saccharomyces cerevisiae.</title>
        <authorList>
            <person name="Hu Y."/>
            <person name="Rolfs A."/>
            <person name="Bhullar B."/>
            <person name="Murthy T.V.S."/>
            <person name="Zhu C."/>
            <person name="Berger M.F."/>
            <person name="Camargo A.A."/>
            <person name="Kelley F."/>
            <person name="McCarron S."/>
            <person name="Jepson D."/>
            <person name="Richardson A."/>
            <person name="Raphael J."/>
            <person name="Moreira D."/>
            <person name="Taycher E."/>
            <person name="Zuo D."/>
            <person name="Mohr S."/>
            <person name="Kane M.F."/>
            <person name="Williamson J."/>
            <person name="Simpson A.J.G."/>
            <person name="Bulyk M.L."/>
            <person name="Harlow E."/>
            <person name="Marsischky G."/>
            <person name="Kolodner R.D."/>
            <person name="LaBaer J."/>
        </authorList>
    </citation>
    <scope>NUCLEOTIDE SEQUENCE [GENOMIC DNA]</scope>
    <source>
        <strain>ATCC 204508 / S288c</strain>
    </source>
</reference>
<reference key="5">
    <citation type="journal article" date="1996" name="Genetics">
        <title>Mutants of Saccharomyces cerevisiae with defects in acetate metabolism: isolation and characterization of Acn- mutants.</title>
        <authorList>
            <person name="McCammon M.T."/>
        </authorList>
    </citation>
    <scope>FUNCTION</scope>
</reference>
<reference key="6">
    <citation type="journal article" date="1999" name="Arch. Biochem. Biophys.">
        <title>Yeast mutants of glucose metabolism with defects in the coordinate regulation of carbon assimilation.</title>
        <authorList>
            <person name="Dennis R.A."/>
            <person name="Rhodey M."/>
            <person name="McCammon M.T."/>
        </authorList>
    </citation>
    <scope>FUNCTION</scope>
</reference>
<reference key="7">
    <citation type="journal article" date="1999" name="Eur. J. Biochem.">
        <title>Acn9 is a novel protein of gluconeogenesis that is located in the mitochondrial intermembrane space.</title>
        <authorList>
            <person name="Dennis R.A."/>
            <person name="McCammon M.T."/>
        </authorList>
    </citation>
    <scope>FUNCTION</scope>
    <scope>SUBCELLULAR LOCATION</scope>
</reference>
<reference key="8">
    <citation type="journal article" date="2003" name="Nature">
        <title>Global analysis of protein localization in budding yeast.</title>
        <authorList>
            <person name="Huh W.-K."/>
            <person name="Falvo J.V."/>
            <person name="Gerke L.C."/>
            <person name="Carroll A.S."/>
            <person name="Howson R.W."/>
            <person name="Weissman J.S."/>
            <person name="O'Shea E.K."/>
        </authorList>
    </citation>
    <scope>SUBCELLULAR LOCATION [LARGE SCALE ANALYSIS]</scope>
</reference>
<reference key="9">
    <citation type="journal article" date="2003" name="Nature">
        <title>Global analysis of protein expression in yeast.</title>
        <authorList>
            <person name="Ghaemmaghami S."/>
            <person name="Huh W.-K."/>
            <person name="Bower K."/>
            <person name="Howson R.W."/>
            <person name="Belle A."/>
            <person name="Dephoure N."/>
            <person name="O'Shea E.K."/>
            <person name="Weissman J.S."/>
        </authorList>
    </citation>
    <scope>LEVEL OF PROTEIN EXPRESSION [LARGE SCALE ANALYSIS]</scope>
</reference>
<reference key="10">
    <citation type="journal article" date="2006" name="J. Proteome Res.">
        <title>Toward the complete yeast mitochondrial proteome: multidimensional separation techniques for mitochondrial proteomics.</title>
        <authorList>
            <person name="Reinders J."/>
            <person name="Zahedi R.P."/>
            <person name="Pfanner N."/>
            <person name="Meisinger C."/>
            <person name="Sickmann A."/>
        </authorList>
    </citation>
    <scope>SUBCELLULAR LOCATION [LARGE SCALE ANALYSIS]</scope>
    <scope>IDENTIFICATION BY MASS SPECTROMETRY</scope>
</reference>
<reference key="11">
    <citation type="journal article" date="2009" name="Cell">
        <title>Global analysis of the mitochondrial N-proteome identifies a processing peptidase critical for protein stability.</title>
        <authorList>
            <person name="Vogtle F.N."/>
            <person name="Wortelkamp S."/>
            <person name="Zahedi R.P."/>
            <person name="Becker D."/>
            <person name="Leidhold C."/>
            <person name="Gevaert K."/>
            <person name="Kellermann J."/>
            <person name="Voos W."/>
            <person name="Sickmann A."/>
            <person name="Pfanner N."/>
            <person name="Meisinger C."/>
        </authorList>
    </citation>
    <scope>IDENTIFICATION OF MATURE N-TERMINUS</scope>
    <scope>MASS SPECTROMETRY</scope>
</reference>
<reference key="12">
    <citation type="journal article" date="2014" name="Cell Metab.">
        <title>The LYR factors SDHAF1 and SDHAF3 mediate maturation of the iron-sulfur subunit of succinate dehydrogenase.</title>
        <authorList>
            <person name="Na U."/>
            <person name="Yu W."/>
            <person name="Cox J."/>
            <person name="Bricker D.K."/>
            <person name="Brockmann K."/>
            <person name="Rutter J."/>
            <person name="Thummel C.S."/>
            <person name="Winge D.R."/>
        </authorList>
    </citation>
    <scope>FUNCTION</scope>
    <scope>SUBCELLULAR LOCATION</scope>
    <scope>INTERACTION WITH SDH2</scope>
</reference>
<feature type="transit peptide" description="Mitochondrion" evidence="5">
    <location>
        <begin position="1"/>
        <end position="12"/>
    </location>
</feature>
<feature type="chain" id="PRO_0000042652" description="Succinate dehydrogenase assembly factor 3, mitochondrial">
    <location>
        <begin position="13"/>
        <end position="133"/>
    </location>
</feature>
<feature type="sequence conflict" description="In Ref. 1; AAB01676." evidence="9" ref="1">
    <original>A</original>
    <variation>G</variation>
    <location>
        <position position="13"/>
    </location>
</feature>
<feature type="sequence conflict" description="In Ref. 1; AAB01676." evidence="9" ref="1">
    <original>S</original>
    <variation>R</variation>
    <location>
        <position position="17"/>
    </location>
</feature>
<organism>
    <name type="scientific">Saccharomyces cerevisiae (strain ATCC 204508 / S288c)</name>
    <name type="common">Baker's yeast</name>
    <dbReference type="NCBI Taxonomy" id="559292"/>
    <lineage>
        <taxon>Eukaryota</taxon>
        <taxon>Fungi</taxon>
        <taxon>Dikarya</taxon>
        <taxon>Ascomycota</taxon>
        <taxon>Saccharomycotina</taxon>
        <taxon>Saccharomycetes</taxon>
        <taxon>Saccharomycetales</taxon>
        <taxon>Saccharomycetaceae</taxon>
        <taxon>Saccharomyces</taxon>
    </lineage>
</organism>
<evidence type="ECO:0000269" key="1">
    <source>
    </source>
</evidence>
<evidence type="ECO:0000269" key="2">
    <source>
    </source>
</evidence>
<evidence type="ECO:0000269" key="3">
    <source>
    </source>
</evidence>
<evidence type="ECO:0000269" key="4">
    <source>
    </source>
</evidence>
<evidence type="ECO:0000269" key="5">
    <source>
    </source>
</evidence>
<evidence type="ECO:0000269" key="6">
    <source>
    </source>
</evidence>
<evidence type="ECO:0000303" key="7">
    <source>
    </source>
</evidence>
<evidence type="ECO:0000303" key="8">
    <source>
    </source>
</evidence>
<evidence type="ECO:0000305" key="9"/>
<evidence type="ECO:0000312" key="10">
    <source>
        <dbReference type="SGD" id="S000002919"/>
    </source>
</evidence>
<protein>
    <recommendedName>
        <fullName evidence="7">Succinate dehydrogenase assembly factor 3, mitochondrial</fullName>
        <shortName>SDH assembly factor 3</shortName>
        <shortName evidence="7">SDHAF3</shortName>
    </recommendedName>
    <alternativeName>
        <fullName evidence="8">Acetate non-utilizing protein 9</fullName>
    </alternativeName>
</protein>
<name>SDHF3_YEAST</name>
<accession>Q04401</accession>
<accession>D6VTD2</accession>
<accession>Q02562</accession>
<proteinExistence type="evidence at protein level"/>
<dbReference type="EMBL" id="U27233">
    <property type="protein sequence ID" value="AAB01676.1"/>
    <property type="molecule type" value="Genomic_DNA"/>
</dbReference>
<dbReference type="EMBL" id="U33057">
    <property type="protein sequence ID" value="AAB64952.1"/>
    <property type="molecule type" value="Genomic_DNA"/>
</dbReference>
<dbReference type="EMBL" id="AY558175">
    <property type="protein sequence ID" value="AAS56501.1"/>
    <property type="molecule type" value="Genomic_DNA"/>
</dbReference>
<dbReference type="EMBL" id="BK006938">
    <property type="protein sequence ID" value="DAA12342.1"/>
    <property type="molecule type" value="Genomic_DNA"/>
</dbReference>
<dbReference type="PIR" id="S69568">
    <property type="entry name" value="S69568"/>
</dbReference>
<dbReference type="RefSeq" id="NP_010799.3">
    <property type="nucleotide sequence ID" value="NM_001180819.3"/>
</dbReference>
<dbReference type="SMR" id="Q04401"/>
<dbReference type="BioGRID" id="32562">
    <property type="interactions" value="49"/>
</dbReference>
<dbReference type="DIP" id="DIP-2752N"/>
<dbReference type="FunCoup" id="Q04401">
    <property type="interactions" value="309"/>
</dbReference>
<dbReference type="IntAct" id="Q04401">
    <property type="interactions" value="4"/>
</dbReference>
<dbReference type="MINT" id="Q04401"/>
<dbReference type="STRING" id="4932.YDR511W"/>
<dbReference type="iPTMnet" id="Q04401"/>
<dbReference type="PaxDb" id="4932-YDR511W"/>
<dbReference type="PeptideAtlas" id="Q04401"/>
<dbReference type="EnsemblFungi" id="YDR511W_mRNA">
    <property type="protein sequence ID" value="YDR511W"/>
    <property type="gene ID" value="YDR511W"/>
</dbReference>
<dbReference type="GeneID" id="852123"/>
<dbReference type="KEGG" id="sce:YDR511W"/>
<dbReference type="AGR" id="SGD:S000002919"/>
<dbReference type="SGD" id="S000002919">
    <property type="gene designation" value="SDH7"/>
</dbReference>
<dbReference type="VEuPathDB" id="FungiDB:YDR511W"/>
<dbReference type="eggNOG" id="KOG4100">
    <property type="taxonomic scope" value="Eukaryota"/>
</dbReference>
<dbReference type="GeneTree" id="ENSGT00390000010029"/>
<dbReference type="HOGENOM" id="CLU_102310_1_1_1"/>
<dbReference type="InParanoid" id="Q04401"/>
<dbReference type="OMA" id="WQQTNEN"/>
<dbReference type="OrthoDB" id="278329at2759"/>
<dbReference type="BioCyc" id="YEAST:G3O-30031-MONOMER"/>
<dbReference type="BioGRID-ORCS" id="852123">
    <property type="hits" value="0 hits in 10 CRISPR screens"/>
</dbReference>
<dbReference type="PRO" id="PR:Q04401"/>
<dbReference type="Proteomes" id="UP000002311">
    <property type="component" value="Chromosome IV"/>
</dbReference>
<dbReference type="RNAct" id="Q04401">
    <property type="molecule type" value="protein"/>
</dbReference>
<dbReference type="GO" id="GO:0005758">
    <property type="term" value="C:mitochondrial intermembrane space"/>
    <property type="evidence" value="ECO:0000314"/>
    <property type="project" value="SGD"/>
</dbReference>
<dbReference type="GO" id="GO:0005759">
    <property type="term" value="C:mitochondrial matrix"/>
    <property type="evidence" value="ECO:0007669"/>
    <property type="project" value="UniProtKB-SubCell"/>
</dbReference>
<dbReference type="GO" id="GO:0005739">
    <property type="term" value="C:mitochondrion"/>
    <property type="evidence" value="ECO:0007005"/>
    <property type="project" value="SGD"/>
</dbReference>
<dbReference type="GO" id="GO:0015976">
    <property type="term" value="P:carbon utilization"/>
    <property type="evidence" value="ECO:0000315"/>
    <property type="project" value="SGD"/>
</dbReference>
<dbReference type="GO" id="GO:0034553">
    <property type="term" value="P:mitochondrial respiratory chain complex II assembly"/>
    <property type="evidence" value="ECO:0000353"/>
    <property type="project" value="SGD"/>
</dbReference>
<dbReference type="GO" id="GO:0006111">
    <property type="term" value="P:regulation of gluconeogenesis"/>
    <property type="evidence" value="ECO:0000315"/>
    <property type="project" value="SGD"/>
</dbReference>
<dbReference type="GO" id="GO:0006105">
    <property type="term" value="P:succinate metabolic process"/>
    <property type="evidence" value="ECO:0000318"/>
    <property type="project" value="GO_Central"/>
</dbReference>
<dbReference type="CDD" id="cd20270">
    <property type="entry name" value="Complex1_LYR_SDHAF3_LYRM10"/>
    <property type="match status" value="1"/>
</dbReference>
<dbReference type="InterPro" id="IPR008381">
    <property type="entry name" value="SDHAF3/Sdh7"/>
</dbReference>
<dbReference type="PANTHER" id="PTHR13137">
    <property type="entry name" value="DC11 ACN9 HOMOLOG"/>
    <property type="match status" value="1"/>
</dbReference>
<dbReference type="PANTHER" id="PTHR13137:SF6">
    <property type="entry name" value="SUCCINATE DEHYDROGENASE ASSEMBLY FACTOR 3, MITOCHONDRIAL"/>
    <property type="match status" value="1"/>
</dbReference>
<dbReference type="Pfam" id="PF13233">
    <property type="entry name" value="Complex1_LYR_2"/>
    <property type="match status" value="1"/>
</dbReference>
<sequence length="133" mass="15783">MNNKLIYRSVRFATHNSQLLLPPLVLYRRILRQHKLLPGPQREMGDQYVRNEFKLHKDIDNPLHIVGFLASWQDYLHMISNGKWKDATLSSETLEKLSPEQTVQLYELMKETQKLHQDNEIESSKDVKRNNKD</sequence>
<gene>
    <name evidence="7" type="primary">SDH7</name>
    <name evidence="8" type="synonym">ACN9</name>
    <name evidence="10" type="ordered locus">YDR511W</name>
    <name type="ORF">D9719.16</name>
</gene>
<keyword id="KW-0143">Chaperone</keyword>
<keyword id="KW-0496">Mitochondrion</keyword>
<keyword id="KW-1185">Reference proteome</keyword>
<keyword id="KW-0809">Transit peptide</keyword>